<protein>
    <recommendedName>
        <fullName evidence="1">Protein ApaG</fullName>
    </recommendedName>
</protein>
<sequence length="130" mass="14655">MYRALTRDIEVVVEPFYLEEQSDPEDDRYVWGYRIVISNNSGVAVRLVNRYWNITDQNGQVDEVTGPGVVGEQPRLSPGDTYEYSSGCPLDTPSGLMFGHYQMETDEGELFDVDIPAFSLDSPGLLRVLN</sequence>
<comment type="sequence caution" evidence="3">
    <conflict type="erroneous initiation">
        <sequence resource="EMBL-CDS" id="CAA09984"/>
    </conflict>
    <text>Extended N-terminus.</text>
</comment>
<proteinExistence type="inferred from homology"/>
<keyword id="KW-1185">Reference proteome</keyword>
<organism>
    <name type="scientific">Rhizobium etli (strain ATCC 51251 / DSM 11541 / JCM 21823 / NBRC 15573 / CFN 42)</name>
    <dbReference type="NCBI Taxonomy" id="347834"/>
    <lineage>
        <taxon>Bacteria</taxon>
        <taxon>Pseudomonadati</taxon>
        <taxon>Pseudomonadota</taxon>
        <taxon>Alphaproteobacteria</taxon>
        <taxon>Hyphomicrobiales</taxon>
        <taxon>Rhizobiaceae</taxon>
        <taxon>Rhizobium/Agrobacterium group</taxon>
        <taxon>Rhizobium</taxon>
    </lineage>
</organism>
<dbReference type="EMBL" id="AJ012295">
    <property type="protein sequence ID" value="CAA09984.1"/>
    <property type="status" value="ALT_INIT"/>
    <property type="molecule type" value="Genomic_DNA"/>
</dbReference>
<dbReference type="EMBL" id="CP000133">
    <property type="protein sequence ID" value="ABC89340.1"/>
    <property type="molecule type" value="Genomic_DNA"/>
</dbReference>
<dbReference type="RefSeq" id="WP_011423893.1">
    <property type="nucleotide sequence ID" value="NC_007761.1"/>
</dbReference>
<dbReference type="SMR" id="Q2KCU6"/>
<dbReference type="GeneID" id="66144693"/>
<dbReference type="KEGG" id="ret:RHE_CH00521"/>
<dbReference type="eggNOG" id="COG2967">
    <property type="taxonomic scope" value="Bacteria"/>
</dbReference>
<dbReference type="HOGENOM" id="CLU_128074_1_0_5"/>
<dbReference type="OrthoDB" id="9795226at2"/>
<dbReference type="Proteomes" id="UP000001936">
    <property type="component" value="Chromosome"/>
</dbReference>
<dbReference type="GO" id="GO:0070987">
    <property type="term" value="P:error-free translesion synthesis"/>
    <property type="evidence" value="ECO:0007669"/>
    <property type="project" value="TreeGrafter"/>
</dbReference>
<dbReference type="Gene3D" id="2.60.40.1470">
    <property type="entry name" value="ApaG domain"/>
    <property type="match status" value="1"/>
</dbReference>
<dbReference type="HAMAP" id="MF_00791">
    <property type="entry name" value="ApaG"/>
    <property type="match status" value="1"/>
</dbReference>
<dbReference type="InterPro" id="IPR007474">
    <property type="entry name" value="ApaG_domain"/>
</dbReference>
<dbReference type="InterPro" id="IPR036767">
    <property type="entry name" value="ApaG_sf"/>
</dbReference>
<dbReference type="InterPro" id="IPR023065">
    <property type="entry name" value="Uncharacterised_ApaG"/>
</dbReference>
<dbReference type="NCBIfam" id="NF003967">
    <property type="entry name" value="PRK05461.1"/>
    <property type="match status" value="1"/>
</dbReference>
<dbReference type="PANTHER" id="PTHR14289">
    <property type="entry name" value="F-BOX ONLY PROTEIN 3"/>
    <property type="match status" value="1"/>
</dbReference>
<dbReference type="PANTHER" id="PTHR14289:SF16">
    <property type="entry name" value="POLYMERASE DELTA-INTERACTING PROTEIN 2"/>
    <property type="match status" value="1"/>
</dbReference>
<dbReference type="Pfam" id="PF04379">
    <property type="entry name" value="DUF525"/>
    <property type="match status" value="1"/>
</dbReference>
<dbReference type="SUPFAM" id="SSF110069">
    <property type="entry name" value="ApaG-like"/>
    <property type="match status" value="1"/>
</dbReference>
<dbReference type="PROSITE" id="PS51087">
    <property type="entry name" value="APAG"/>
    <property type="match status" value="1"/>
</dbReference>
<feature type="chain" id="PRO_1000083639" description="Protein ApaG">
    <location>
        <begin position="1"/>
        <end position="130"/>
    </location>
</feature>
<feature type="domain" description="ApaG" evidence="1">
    <location>
        <begin position="3"/>
        <end position="127"/>
    </location>
</feature>
<feature type="region of interest" description="Disordered" evidence="2">
    <location>
        <begin position="63"/>
        <end position="83"/>
    </location>
</feature>
<feature type="sequence conflict" description="In Ref. 1; CAA09984." evidence="3" ref="1">
    <original>GL</original>
    <variation>AV</variation>
    <location>
        <begin position="95"/>
        <end position="96"/>
    </location>
</feature>
<accession>Q2KCU6</accession>
<accession>Q9ZES3</accession>
<name>APAG_RHIEC</name>
<reference key="1">
    <citation type="journal article" date="1999" name="Mol. Plant Microbe Interact.">
        <title>The Rhizobium etli metZ gene is essential for methionine biosynthesis and nodulation of Phaseolus vulgaris.</title>
        <authorList>
            <person name="Tate R."/>
            <person name="Riccio A."/>
            <person name="Caputo E."/>
            <person name="Iaccarino M."/>
            <person name="Patriarca E.J."/>
        </authorList>
    </citation>
    <scope>NUCLEOTIDE SEQUENCE [GENOMIC DNA]</scope>
    <source>
        <strain>CE3</strain>
    </source>
</reference>
<reference key="2">
    <citation type="journal article" date="2006" name="Proc. Natl. Acad. Sci. U.S.A.">
        <title>The partitioned Rhizobium etli genome: genetic and metabolic redundancy in seven interacting replicons.</title>
        <authorList>
            <person name="Gonzalez V."/>
            <person name="Santamaria R.I."/>
            <person name="Bustos P."/>
            <person name="Hernandez-Gonzalez I."/>
            <person name="Medrano-Soto A."/>
            <person name="Moreno-Hagelsieb G."/>
            <person name="Janga S.C."/>
            <person name="Ramirez M.A."/>
            <person name="Jimenez-Jacinto V."/>
            <person name="Collado-Vides J."/>
            <person name="Davila G."/>
        </authorList>
    </citation>
    <scope>NUCLEOTIDE SEQUENCE [LARGE SCALE GENOMIC DNA]</scope>
    <source>
        <strain>ATCC 51251 / DSM 11541 / JCM 21823 / NBRC 15573 / CFN 42</strain>
    </source>
</reference>
<evidence type="ECO:0000255" key="1">
    <source>
        <dbReference type="HAMAP-Rule" id="MF_00791"/>
    </source>
</evidence>
<evidence type="ECO:0000256" key="2">
    <source>
        <dbReference type="SAM" id="MobiDB-lite"/>
    </source>
</evidence>
<evidence type="ECO:0000305" key="3"/>
<gene>
    <name evidence="1" type="primary">apaG</name>
    <name type="ordered locus">RHE_CH00521</name>
</gene>